<evidence type="ECO:0000255" key="1">
    <source>
        <dbReference type="HAMAP-Rule" id="MF_00144"/>
    </source>
</evidence>
<sequence>MTSIEPTHTGKKVIVGMSGGVDSSVSAYLLMQQGYQVEGLFMKNWEEDDNDEYCAAAEDLKDAQAVCDKLGIKLHTVNFAAEYWDNVFEYFLAEYKAGRTPNPDIMCNKEIKFKAFLDFADDILDADYIAMGHYVRRRDNADGTTQMLRGVDNNKDQSYFLYTLSHEQVARSLFPVGELEKHEVREIAKKMGLITHDKKDSTGICFIGERKFTEFLGNYLPAQPGNIETAEGEIIGKHQGLMYQTLGQRKGLGIGGMKNSNDDPWYVVDKDLKRNVLVVGQGGHHPRLMSNGMLVNQLHWVDRKGPAEGSQIVVKTRYRQQDIPCTLTYLDDNTLKVVFDEPVAAVTPGQSAVFYDGEVCLGGGIIDQLIRG</sequence>
<comment type="function">
    <text evidence="1">Catalyzes the 2-thiolation of uridine at the wobble position (U34) of tRNA, leading to the formation of s(2)U34.</text>
</comment>
<comment type="catalytic activity">
    <reaction evidence="1">
        <text>S-sulfanyl-L-cysteinyl-[protein] + uridine(34) in tRNA + AH2 + ATP = 2-thiouridine(34) in tRNA + L-cysteinyl-[protein] + A + AMP + diphosphate + H(+)</text>
        <dbReference type="Rhea" id="RHEA:47032"/>
        <dbReference type="Rhea" id="RHEA-COMP:10131"/>
        <dbReference type="Rhea" id="RHEA-COMP:11726"/>
        <dbReference type="Rhea" id="RHEA-COMP:11727"/>
        <dbReference type="Rhea" id="RHEA-COMP:11728"/>
        <dbReference type="ChEBI" id="CHEBI:13193"/>
        <dbReference type="ChEBI" id="CHEBI:15378"/>
        <dbReference type="ChEBI" id="CHEBI:17499"/>
        <dbReference type="ChEBI" id="CHEBI:29950"/>
        <dbReference type="ChEBI" id="CHEBI:30616"/>
        <dbReference type="ChEBI" id="CHEBI:33019"/>
        <dbReference type="ChEBI" id="CHEBI:61963"/>
        <dbReference type="ChEBI" id="CHEBI:65315"/>
        <dbReference type="ChEBI" id="CHEBI:87170"/>
        <dbReference type="ChEBI" id="CHEBI:456215"/>
        <dbReference type="EC" id="2.8.1.13"/>
    </reaction>
</comment>
<comment type="subcellular location">
    <subcellularLocation>
        <location evidence="1">Cytoplasm</location>
    </subcellularLocation>
</comment>
<comment type="similarity">
    <text evidence="1">Belongs to the MnmA/TRMU family.</text>
</comment>
<accession>A0KW11</accession>
<name>MNMA_SHESA</name>
<reference key="1">
    <citation type="submission" date="2006-09" db="EMBL/GenBank/DDBJ databases">
        <title>Complete sequence of chromosome 1 of Shewanella sp. ANA-3.</title>
        <authorList>
            <person name="Copeland A."/>
            <person name="Lucas S."/>
            <person name="Lapidus A."/>
            <person name="Barry K."/>
            <person name="Detter J.C."/>
            <person name="Glavina del Rio T."/>
            <person name="Hammon N."/>
            <person name="Israni S."/>
            <person name="Dalin E."/>
            <person name="Tice H."/>
            <person name="Pitluck S."/>
            <person name="Chertkov O."/>
            <person name="Brettin T."/>
            <person name="Bruce D."/>
            <person name="Han C."/>
            <person name="Tapia R."/>
            <person name="Gilna P."/>
            <person name="Schmutz J."/>
            <person name="Larimer F."/>
            <person name="Land M."/>
            <person name="Hauser L."/>
            <person name="Kyrpides N."/>
            <person name="Kim E."/>
            <person name="Newman D."/>
            <person name="Salticov C."/>
            <person name="Konstantinidis K."/>
            <person name="Klappenback J."/>
            <person name="Tiedje J."/>
            <person name="Richardson P."/>
        </authorList>
    </citation>
    <scope>NUCLEOTIDE SEQUENCE [LARGE SCALE GENOMIC DNA]</scope>
    <source>
        <strain>ANA-3</strain>
    </source>
</reference>
<proteinExistence type="inferred from homology"/>
<feature type="chain" id="PRO_1000009573" description="tRNA-specific 2-thiouridylase MnmA">
    <location>
        <begin position="1"/>
        <end position="372"/>
    </location>
</feature>
<feature type="region of interest" description="Interaction with target base in tRNA" evidence="1">
    <location>
        <begin position="102"/>
        <end position="104"/>
    </location>
</feature>
<feature type="region of interest" description="Interaction with tRNA" evidence="1">
    <location>
        <begin position="155"/>
        <end position="157"/>
    </location>
</feature>
<feature type="region of interest" description="Interaction with tRNA" evidence="1">
    <location>
        <begin position="317"/>
        <end position="318"/>
    </location>
</feature>
<feature type="active site" description="Nucleophile" evidence="1">
    <location>
        <position position="107"/>
    </location>
</feature>
<feature type="active site" description="Cysteine persulfide intermediate" evidence="1">
    <location>
        <position position="205"/>
    </location>
</feature>
<feature type="binding site" evidence="1">
    <location>
        <begin position="16"/>
        <end position="23"/>
    </location>
    <ligand>
        <name>ATP</name>
        <dbReference type="ChEBI" id="CHEBI:30616"/>
    </ligand>
</feature>
<feature type="binding site" evidence="1">
    <location>
        <position position="42"/>
    </location>
    <ligand>
        <name>ATP</name>
        <dbReference type="ChEBI" id="CHEBI:30616"/>
    </ligand>
</feature>
<feature type="binding site" evidence="1">
    <location>
        <position position="132"/>
    </location>
    <ligand>
        <name>ATP</name>
        <dbReference type="ChEBI" id="CHEBI:30616"/>
    </ligand>
</feature>
<feature type="site" description="Interaction with tRNA" evidence="1">
    <location>
        <position position="133"/>
    </location>
</feature>
<feature type="site" description="Interaction with tRNA" evidence="1">
    <location>
        <position position="350"/>
    </location>
</feature>
<feature type="disulfide bond" description="Alternate" evidence="1">
    <location>
        <begin position="107"/>
        <end position="205"/>
    </location>
</feature>
<dbReference type="EC" id="2.8.1.13" evidence="1"/>
<dbReference type="EMBL" id="CP000469">
    <property type="protein sequence ID" value="ABK47980.1"/>
    <property type="molecule type" value="Genomic_DNA"/>
</dbReference>
<dbReference type="RefSeq" id="WP_011716766.1">
    <property type="nucleotide sequence ID" value="NC_008577.1"/>
</dbReference>
<dbReference type="SMR" id="A0KW11"/>
<dbReference type="STRING" id="94122.Shewana3_1747"/>
<dbReference type="KEGG" id="shn:Shewana3_1747"/>
<dbReference type="eggNOG" id="COG0482">
    <property type="taxonomic scope" value="Bacteria"/>
</dbReference>
<dbReference type="HOGENOM" id="CLU_035188_1_0_6"/>
<dbReference type="OrthoDB" id="9800696at2"/>
<dbReference type="Proteomes" id="UP000002589">
    <property type="component" value="Chromosome"/>
</dbReference>
<dbReference type="GO" id="GO:0005737">
    <property type="term" value="C:cytoplasm"/>
    <property type="evidence" value="ECO:0007669"/>
    <property type="project" value="UniProtKB-SubCell"/>
</dbReference>
<dbReference type="GO" id="GO:0005524">
    <property type="term" value="F:ATP binding"/>
    <property type="evidence" value="ECO:0007669"/>
    <property type="project" value="UniProtKB-KW"/>
</dbReference>
<dbReference type="GO" id="GO:0000049">
    <property type="term" value="F:tRNA binding"/>
    <property type="evidence" value="ECO:0007669"/>
    <property type="project" value="UniProtKB-KW"/>
</dbReference>
<dbReference type="GO" id="GO:0103016">
    <property type="term" value="F:tRNA-uridine 2-sulfurtransferase activity"/>
    <property type="evidence" value="ECO:0007669"/>
    <property type="project" value="UniProtKB-EC"/>
</dbReference>
<dbReference type="GO" id="GO:0002143">
    <property type="term" value="P:tRNA wobble position uridine thiolation"/>
    <property type="evidence" value="ECO:0007669"/>
    <property type="project" value="TreeGrafter"/>
</dbReference>
<dbReference type="CDD" id="cd01998">
    <property type="entry name" value="MnmA_TRMU-like"/>
    <property type="match status" value="1"/>
</dbReference>
<dbReference type="FunFam" id="2.30.30.280:FF:000001">
    <property type="entry name" value="tRNA-specific 2-thiouridylase MnmA"/>
    <property type="match status" value="1"/>
</dbReference>
<dbReference type="FunFam" id="2.40.30.10:FF:000023">
    <property type="entry name" value="tRNA-specific 2-thiouridylase MnmA"/>
    <property type="match status" value="1"/>
</dbReference>
<dbReference type="FunFam" id="3.40.50.620:FF:000004">
    <property type="entry name" value="tRNA-specific 2-thiouridylase MnmA"/>
    <property type="match status" value="1"/>
</dbReference>
<dbReference type="Gene3D" id="2.30.30.280">
    <property type="entry name" value="Adenine nucleotide alpha hydrolases-like domains"/>
    <property type="match status" value="1"/>
</dbReference>
<dbReference type="Gene3D" id="3.40.50.620">
    <property type="entry name" value="HUPs"/>
    <property type="match status" value="1"/>
</dbReference>
<dbReference type="Gene3D" id="2.40.30.10">
    <property type="entry name" value="Translation factors"/>
    <property type="match status" value="1"/>
</dbReference>
<dbReference type="HAMAP" id="MF_00144">
    <property type="entry name" value="tRNA_thiouridyl_MnmA"/>
    <property type="match status" value="1"/>
</dbReference>
<dbReference type="InterPro" id="IPR004506">
    <property type="entry name" value="MnmA-like"/>
</dbReference>
<dbReference type="InterPro" id="IPR046885">
    <property type="entry name" value="MnmA-like_C"/>
</dbReference>
<dbReference type="InterPro" id="IPR046884">
    <property type="entry name" value="MnmA-like_central"/>
</dbReference>
<dbReference type="InterPro" id="IPR023382">
    <property type="entry name" value="MnmA-like_central_sf"/>
</dbReference>
<dbReference type="InterPro" id="IPR014729">
    <property type="entry name" value="Rossmann-like_a/b/a_fold"/>
</dbReference>
<dbReference type="NCBIfam" id="NF001138">
    <property type="entry name" value="PRK00143.1"/>
    <property type="match status" value="1"/>
</dbReference>
<dbReference type="NCBIfam" id="TIGR00420">
    <property type="entry name" value="trmU"/>
    <property type="match status" value="1"/>
</dbReference>
<dbReference type="PANTHER" id="PTHR11933:SF5">
    <property type="entry name" value="MITOCHONDRIAL TRNA-SPECIFIC 2-THIOURIDYLASE 1"/>
    <property type="match status" value="1"/>
</dbReference>
<dbReference type="PANTHER" id="PTHR11933">
    <property type="entry name" value="TRNA 5-METHYLAMINOMETHYL-2-THIOURIDYLATE -METHYLTRANSFERASE"/>
    <property type="match status" value="1"/>
</dbReference>
<dbReference type="Pfam" id="PF03054">
    <property type="entry name" value="tRNA_Me_trans"/>
    <property type="match status" value="1"/>
</dbReference>
<dbReference type="Pfam" id="PF20258">
    <property type="entry name" value="tRNA_Me_trans_C"/>
    <property type="match status" value="1"/>
</dbReference>
<dbReference type="Pfam" id="PF20259">
    <property type="entry name" value="tRNA_Me_trans_M"/>
    <property type="match status" value="1"/>
</dbReference>
<dbReference type="SUPFAM" id="SSF52402">
    <property type="entry name" value="Adenine nucleotide alpha hydrolases-like"/>
    <property type="match status" value="1"/>
</dbReference>
<protein>
    <recommendedName>
        <fullName evidence="1">tRNA-specific 2-thiouridylase MnmA</fullName>
        <ecNumber evidence="1">2.8.1.13</ecNumber>
    </recommendedName>
</protein>
<gene>
    <name evidence="1" type="primary">mnmA</name>
    <name type="synonym">trmU</name>
    <name type="ordered locus">Shewana3_1747</name>
</gene>
<organism>
    <name type="scientific">Shewanella sp. (strain ANA-3)</name>
    <dbReference type="NCBI Taxonomy" id="94122"/>
    <lineage>
        <taxon>Bacteria</taxon>
        <taxon>Pseudomonadati</taxon>
        <taxon>Pseudomonadota</taxon>
        <taxon>Gammaproteobacteria</taxon>
        <taxon>Alteromonadales</taxon>
        <taxon>Shewanellaceae</taxon>
        <taxon>Shewanella</taxon>
    </lineage>
</organism>
<keyword id="KW-0067">ATP-binding</keyword>
<keyword id="KW-0963">Cytoplasm</keyword>
<keyword id="KW-1015">Disulfide bond</keyword>
<keyword id="KW-0547">Nucleotide-binding</keyword>
<keyword id="KW-0694">RNA-binding</keyword>
<keyword id="KW-0808">Transferase</keyword>
<keyword id="KW-0819">tRNA processing</keyword>
<keyword id="KW-0820">tRNA-binding</keyword>